<organism>
    <name type="scientific">Escherichia coli O45:K1 (strain S88 / ExPEC)</name>
    <dbReference type="NCBI Taxonomy" id="585035"/>
    <lineage>
        <taxon>Bacteria</taxon>
        <taxon>Pseudomonadati</taxon>
        <taxon>Pseudomonadota</taxon>
        <taxon>Gammaproteobacteria</taxon>
        <taxon>Enterobacterales</taxon>
        <taxon>Enterobacteriaceae</taxon>
        <taxon>Escherichia</taxon>
    </lineage>
</organism>
<gene>
    <name evidence="1" type="primary">rplB</name>
    <name type="ordered locus">ECS88_3704</name>
</gene>
<accession>B7MCT2</accession>
<sequence length="273" mass="29860">MAVVKCKPTSPGRRHVVKVVNPELHKGKPFAPLLEKNSKSGGRNNNGRITTRHIGGGHKQAYRIVDFKRNKDGIPAVVERLEYDPNRSANIALVLYKDGERRYILAPKGLKAGDQIQSGVDAAIKPGNTLPMRNIPVGSTVHNVEMKPGKGGQLARSAGTYVQIVARDGAYVTLRLRSGEMRKVEADCRATLGEVGNAEHMLRVLGKAGAARWRGVRPTVRGTAMNPVDHPHGGGEGRNFGKHPVTPWGVQTKGKKTRSNKRTDKFIVRRRSK</sequence>
<proteinExistence type="inferred from homology"/>
<evidence type="ECO:0000255" key="1">
    <source>
        <dbReference type="HAMAP-Rule" id="MF_01320"/>
    </source>
</evidence>
<evidence type="ECO:0000256" key="2">
    <source>
        <dbReference type="SAM" id="MobiDB-lite"/>
    </source>
</evidence>
<evidence type="ECO:0000305" key="3"/>
<dbReference type="EMBL" id="CU928161">
    <property type="protein sequence ID" value="CAR04921.1"/>
    <property type="molecule type" value="Genomic_DNA"/>
</dbReference>
<dbReference type="RefSeq" id="WP_000301864.1">
    <property type="nucleotide sequence ID" value="NC_011742.1"/>
</dbReference>
<dbReference type="EMDB" id="EMD-7341"/>
<dbReference type="EMDB" id="EMD-7970"/>
<dbReference type="EMDB" id="EMD-8826"/>
<dbReference type="EMDB" id="EMD-8829"/>
<dbReference type="SMR" id="B7MCT2"/>
<dbReference type="IntAct" id="B7MCT2">
    <property type="interactions" value="1"/>
</dbReference>
<dbReference type="GeneID" id="93778670"/>
<dbReference type="KEGG" id="ecz:ECS88_3704"/>
<dbReference type="HOGENOM" id="CLU_036235_2_1_6"/>
<dbReference type="Proteomes" id="UP000000747">
    <property type="component" value="Chromosome"/>
</dbReference>
<dbReference type="GO" id="GO:0005829">
    <property type="term" value="C:cytosol"/>
    <property type="evidence" value="ECO:0007669"/>
    <property type="project" value="UniProtKB-ARBA"/>
</dbReference>
<dbReference type="GO" id="GO:0015934">
    <property type="term" value="C:large ribosomal subunit"/>
    <property type="evidence" value="ECO:0007669"/>
    <property type="project" value="InterPro"/>
</dbReference>
<dbReference type="GO" id="GO:0019843">
    <property type="term" value="F:rRNA binding"/>
    <property type="evidence" value="ECO:0007669"/>
    <property type="project" value="UniProtKB-UniRule"/>
</dbReference>
<dbReference type="GO" id="GO:0003735">
    <property type="term" value="F:structural constituent of ribosome"/>
    <property type="evidence" value="ECO:0007669"/>
    <property type="project" value="InterPro"/>
</dbReference>
<dbReference type="GO" id="GO:0016740">
    <property type="term" value="F:transferase activity"/>
    <property type="evidence" value="ECO:0007669"/>
    <property type="project" value="InterPro"/>
</dbReference>
<dbReference type="GO" id="GO:0002181">
    <property type="term" value="P:cytoplasmic translation"/>
    <property type="evidence" value="ECO:0007669"/>
    <property type="project" value="TreeGrafter"/>
</dbReference>
<dbReference type="FunFam" id="2.30.30.30:FF:000001">
    <property type="entry name" value="50S ribosomal protein L2"/>
    <property type="match status" value="1"/>
</dbReference>
<dbReference type="FunFam" id="2.40.50.140:FF:000003">
    <property type="entry name" value="50S ribosomal protein L2"/>
    <property type="match status" value="1"/>
</dbReference>
<dbReference type="FunFam" id="4.10.950.10:FF:000001">
    <property type="entry name" value="50S ribosomal protein L2"/>
    <property type="match status" value="1"/>
</dbReference>
<dbReference type="Gene3D" id="2.30.30.30">
    <property type="match status" value="1"/>
</dbReference>
<dbReference type="Gene3D" id="2.40.50.140">
    <property type="entry name" value="Nucleic acid-binding proteins"/>
    <property type="match status" value="1"/>
</dbReference>
<dbReference type="Gene3D" id="4.10.950.10">
    <property type="entry name" value="Ribosomal protein L2, domain 3"/>
    <property type="match status" value="1"/>
</dbReference>
<dbReference type="HAMAP" id="MF_01320_B">
    <property type="entry name" value="Ribosomal_uL2_B"/>
    <property type="match status" value="1"/>
</dbReference>
<dbReference type="InterPro" id="IPR012340">
    <property type="entry name" value="NA-bd_OB-fold"/>
</dbReference>
<dbReference type="InterPro" id="IPR014722">
    <property type="entry name" value="Rib_uL2_dom2"/>
</dbReference>
<dbReference type="InterPro" id="IPR002171">
    <property type="entry name" value="Ribosomal_uL2"/>
</dbReference>
<dbReference type="InterPro" id="IPR005880">
    <property type="entry name" value="Ribosomal_uL2_bac/org-type"/>
</dbReference>
<dbReference type="InterPro" id="IPR022669">
    <property type="entry name" value="Ribosomal_uL2_C"/>
</dbReference>
<dbReference type="InterPro" id="IPR022671">
    <property type="entry name" value="Ribosomal_uL2_CS"/>
</dbReference>
<dbReference type="InterPro" id="IPR014726">
    <property type="entry name" value="Ribosomal_uL2_dom3"/>
</dbReference>
<dbReference type="InterPro" id="IPR022666">
    <property type="entry name" value="Ribosomal_uL2_RNA-bd_dom"/>
</dbReference>
<dbReference type="InterPro" id="IPR008991">
    <property type="entry name" value="Translation_prot_SH3-like_sf"/>
</dbReference>
<dbReference type="NCBIfam" id="TIGR01171">
    <property type="entry name" value="rplB_bact"/>
    <property type="match status" value="1"/>
</dbReference>
<dbReference type="PANTHER" id="PTHR13691:SF5">
    <property type="entry name" value="LARGE RIBOSOMAL SUBUNIT PROTEIN UL2M"/>
    <property type="match status" value="1"/>
</dbReference>
<dbReference type="PANTHER" id="PTHR13691">
    <property type="entry name" value="RIBOSOMAL PROTEIN L2"/>
    <property type="match status" value="1"/>
</dbReference>
<dbReference type="Pfam" id="PF00181">
    <property type="entry name" value="Ribosomal_L2"/>
    <property type="match status" value="1"/>
</dbReference>
<dbReference type="Pfam" id="PF03947">
    <property type="entry name" value="Ribosomal_L2_C"/>
    <property type="match status" value="1"/>
</dbReference>
<dbReference type="PIRSF" id="PIRSF002158">
    <property type="entry name" value="Ribosomal_L2"/>
    <property type="match status" value="1"/>
</dbReference>
<dbReference type="SMART" id="SM01383">
    <property type="entry name" value="Ribosomal_L2"/>
    <property type="match status" value="1"/>
</dbReference>
<dbReference type="SMART" id="SM01382">
    <property type="entry name" value="Ribosomal_L2_C"/>
    <property type="match status" value="1"/>
</dbReference>
<dbReference type="SUPFAM" id="SSF50249">
    <property type="entry name" value="Nucleic acid-binding proteins"/>
    <property type="match status" value="1"/>
</dbReference>
<dbReference type="SUPFAM" id="SSF50104">
    <property type="entry name" value="Translation proteins SH3-like domain"/>
    <property type="match status" value="1"/>
</dbReference>
<dbReference type="PROSITE" id="PS00467">
    <property type="entry name" value="RIBOSOMAL_L2"/>
    <property type="match status" value="1"/>
</dbReference>
<feature type="chain" id="PRO_1000141543" description="Large ribosomal subunit protein uL2">
    <location>
        <begin position="1"/>
        <end position="273"/>
    </location>
</feature>
<feature type="region of interest" description="Disordered" evidence="2">
    <location>
        <begin position="28"/>
        <end position="53"/>
    </location>
</feature>
<feature type="region of interest" description="Disordered" evidence="2">
    <location>
        <begin position="221"/>
        <end position="273"/>
    </location>
</feature>
<feature type="compositionally biased region" description="Low complexity" evidence="2">
    <location>
        <begin position="39"/>
        <end position="48"/>
    </location>
</feature>
<feature type="modified residue" description="N6-acetyllysine" evidence="1">
    <location>
        <position position="242"/>
    </location>
</feature>
<name>RL2_ECO45</name>
<comment type="function">
    <text evidence="1">One of the primary rRNA binding proteins. Required for association of the 30S and 50S subunits to form the 70S ribosome, for tRNA binding and peptide bond formation. It has been suggested to have peptidyltransferase activity; this is somewhat controversial. Makes several contacts with the 16S rRNA in the 70S ribosome.</text>
</comment>
<comment type="subunit">
    <text evidence="1">Part of the 50S ribosomal subunit. Forms a bridge to the 30S subunit in the 70S ribosome.</text>
</comment>
<comment type="similarity">
    <text evidence="1">Belongs to the universal ribosomal protein uL2 family.</text>
</comment>
<reference key="1">
    <citation type="journal article" date="2009" name="PLoS Genet.">
        <title>Organised genome dynamics in the Escherichia coli species results in highly diverse adaptive paths.</title>
        <authorList>
            <person name="Touchon M."/>
            <person name="Hoede C."/>
            <person name="Tenaillon O."/>
            <person name="Barbe V."/>
            <person name="Baeriswyl S."/>
            <person name="Bidet P."/>
            <person name="Bingen E."/>
            <person name="Bonacorsi S."/>
            <person name="Bouchier C."/>
            <person name="Bouvet O."/>
            <person name="Calteau A."/>
            <person name="Chiapello H."/>
            <person name="Clermont O."/>
            <person name="Cruveiller S."/>
            <person name="Danchin A."/>
            <person name="Diard M."/>
            <person name="Dossat C."/>
            <person name="Karoui M.E."/>
            <person name="Frapy E."/>
            <person name="Garry L."/>
            <person name="Ghigo J.M."/>
            <person name="Gilles A.M."/>
            <person name="Johnson J."/>
            <person name="Le Bouguenec C."/>
            <person name="Lescat M."/>
            <person name="Mangenot S."/>
            <person name="Martinez-Jehanne V."/>
            <person name="Matic I."/>
            <person name="Nassif X."/>
            <person name="Oztas S."/>
            <person name="Petit M.A."/>
            <person name="Pichon C."/>
            <person name="Rouy Z."/>
            <person name="Ruf C.S."/>
            <person name="Schneider D."/>
            <person name="Tourret J."/>
            <person name="Vacherie B."/>
            <person name="Vallenet D."/>
            <person name="Medigue C."/>
            <person name="Rocha E.P.C."/>
            <person name="Denamur E."/>
        </authorList>
    </citation>
    <scope>NUCLEOTIDE SEQUENCE [LARGE SCALE GENOMIC DNA]</scope>
    <source>
        <strain>S88 / ExPEC</strain>
    </source>
</reference>
<protein>
    <recommendedName>
        <fullName evidence="1">Large ribosomal subunit protein uL2</fullName>
    </recommendedName>
    <alternativeName>
        <fullName evidence="3">50S ribosomal protein L2</fullName>
    </alternativeName>
</protein>
<keyword id="KW-0007">Acetylation</keyword>
<keyword id="KW-1185">Reference proteome</keyword>
<keyword id="KW-0687">Ribonucleoprotein</keyword>
<keyword id="KW-0689">Ribosomal protein</keyword>
<keyword id="KW-0694">RNA-binding</keyword>
<keyword id="KW-0699">rRNA-binding</keyword>